<dbReference type="EMBL" id="CP003153">
    <property type="protein sequence ID" value="AEV24578.1"/>
    <property type="molecule type" value="Genomic_DNA"/>
</dbReference>
<dbReference type="RefSeq" id="WP_014235280.1">
    <property type="nucleotide sequence ID" value="NC_016616.1"/>
</dbReference>
<dbReference type="SMR" id="G8QM62"/>
<dbReference type="STRING" id="640081.Dsui_0156"/>
<dbReference type="KEGG" id="dsu:Dsui_0156"/>
<dbReference type="eggNOG" id="COG4117">
    <property type="taxonomic scope" value="Bacteria"/>
</dbReference>
<dbReference type="HOGENOM" id="CLU_075520_1_0_4"/>
<dbReference type="OrthoDB" id="197262at2"/>
<dbReference type="Proteomes" id="UP000005633">
    <property type="component" value="Chromosome"/>
</dbReference>
<dbReference type="GO" id="GO:0005886">
    <property type="term" value="C:plasma membrane"/>
    <property type="evidence" value="ECO:0007669"/>
    <property type="project" value="UniProtKB-SubCell"/>
</dbReference>
<dbReference type="GO" id="GO:0009055">
    <property type="term" value="F:electron transfer activity"/>
    <property type="evidence" value="ECO:0007669"/>
    <property type="project" value="InterPro"/>
</dbReference>
<dbReference type="GO" id="GO:0020037">
    <property type="term" value="F:heme binding"/>
    <property type="evidence" value="ECO:0007669"/>
    <property type="project" value="TreeGrafter"/>
</dbReference>
<dbReference type="GO" id="GO:0022904">
    <property type="term" value="P:respiratory electron transport chain"/>
    <property type="evidence" value="ECO:0007669"/>
    <property type="project" value="InterPro"/>
</dbReference>
<dbReference type="Gene3D" id="1.20.950.20">
    <property type="entry name" value="Transmembrane di-heme cytochromes, Chain C"/>
    <property type="match status" value="1"/>
</dbReference>
<dbReference type="InterPro" id="IPR011577">
    <property type="entry name" value="Cyt_b561_bac/Ni-Hgenase"/>
</dbReference>
<dbReference type="InterPro" id="IPR016174">
    <property type="entry name" value="Di-haem_cyt_TM"/>
</dbReference>
<dbReference type="InterPro" id="IPR051542">
    <property type="entry name" value="Hydrogenase_cytochrome"/>
</dbReference>
<dbReference type="PANTHER" id="PTHR30485:SF1">
    <property type="entry name" value="CYTOCHROME YDHU-RELATED"/>
    <property type="match status" value="1"/>
</dbReference>
<dbReference type="PANTHER" id="PTHR30485">
    <property type="entry name" value="NI/FE-HYDROGENASE 1 B-TYPE CYTOCHROME SUBUNIT"/>
    <property type="match status" value="1"/>
</dbReference>
<dbReference type="Pfam" id="PF01292">
    <property type="entry name" value="Ni_hydr_CYTB"/>
    <property type="match status" value="1"/>
</dbReference>
<dbReference type="SUPFAM" id="SSF81342">
    <property type="entry name" value="Transmembrane di-heme cytochromes"/>
    <property type="match status" value="1"/>
</dbReference>
<keyword id="KW-0997">Cell inner membrane</keyword>
<keyword id="KW-1003">Cell membrane</keyword>
<keyword id="KW-0472">Membrane</keyword>
<keyword id="KW-0346">Stress response</keyword>
<keyword id="KW-0812">Transmembrane</keyword>
<keyword id="KW-1133">Transmembrane helix</keyword>
<sequence length="198" mass="22355">MSKEIYAIHPPWLRVTHWLYVVAVVILVMSGWRIYDASPFFPFFIPKEITLGGWLGGALQWHFAAMWLLAVNGLIYLFFNIFSGRLWHKFFPLSLRAIVADLLDALKGKLSHADLSHYNALQRAAYLFAIADIIVIVLSGLVLWKSVQFPILRELLGGYEAARRVHFIGMSALVAFVGVHVAMVALVPRTLIAMIRGH</sequence>
<organism>
    <name type="scientific">Azospira oryzae (strain ATCC BAA-33 / DSM 13638 / PS)</name>
    <name type="common">Dechlorosoma suillum</name>
    <dbReference type="NCBI Taxonomy" id="640081"/>
    <lineage>
        <taxon>Bacteria</taxon>
        <taxon>Pseudomonadati</taxon>
        <taxon>Pseudomonadota</taxon>
        <taxon>Betaproteobacteria</taxon>
        <taxon>Rhodocyclales</taxon>
        <taxon>Rhodocyclaceae</taxon>
        <taxon>Azospira</taxon>
    </lineage>
</organism>
<feature type="chain" id="PRO_0000440887" description="Putative protein-methionine-sulfoxide reductase subunit YedZ1">
    <location>
        <begin position="1"/>
        <end position="198"/>
    </location>
</feature>
<feature type="transmembrane region" description="Helical" evidence="1">
    <location>
        <begin position="12"/>
        <end position="32"/>
    </location>
</feature>
<feature type="transmembrane region" description="Helical" evidence="1">
    <location>
        <begin position="63"/>
        <end position="83"/>
    </location>
</feature>
<feature type="transmembrane region" description="Helical" evidence="1">
    <location>
        <begin position="124"/>
        <end position="144"/>
    </location>
</feature>
<feature type="transmembrane region" description="Helical" evidence="1">
    <location>
        <begin position="167"/>
        <end position="187"/>
    </location>
</feature>
<accession>G8QM62</accession>
<name>YEDZ1_AZOOP</name>
<evidence type="ECO:0000255" key="1"/>
<evidence type="ECO:0000269" key="2">
    <source>
    </source>
</evidence>
<evidence type="ECO:0000303" key="3">
    <source>
    </source>
</evidence>
<evidence type="ECO:0000305" key="4"/>
<evidence type="ECO:0000305" key="5">
    <source>
    </source>
</evidence>
<comment type="function">
    <text evidence="5">Part of the YedY1-YedZ1 system that may repair oxidized proteins containing methionine sulfoxide residues (Met-O).</text>
</comment>
<comment type="subcellular location">
    <subcellularLocation>
        <location evidence="1">Cell inner membrane</location>
        <topology evidence="1">Multi-pass membrane protein</topology>
    </subcellularLocation>
</comment>
<comment type="induction">
    <text evidence="2">Part of the SigF regulon, induced by chlorite under positive control of SigF. Part of the probable yedZ1-yedY1-mrpX operon.</text>
</comment>
<comment type="disruption phenotype">
    <text evidence="2">Growth somewhat inhibited by chlorite.</text>
</comment>
<comment type="similarity">
    <text evidence="4">Belongs to the HupC/HyaC/HydC family.</text>
</comment>
<protein>
    <recommendedName>
        <fullName evidence="3">Putative protein-methionine-sulfoxide reductase subunit YedZ1</fullName>
    </recommendedName>
</protein>
<gene>
    <name evidence="3" type="primary">yedZ1</name>
    <name type="ordered locus">Dsui_0156</name>
</gene>
<reference key="1">
    <citation type="journal article" date="2012" name="J. Bacteriol.">
        <title>Complete genome sequence of the anaerobic perchlorate-reducing bacterium Azospira suillum strain PS.</title>
        <authorList>
            <person name="Byrne-Bailey K.G."/>
            <person name="Coates J.D."/>
        </authorList>
    </citation>
    <scope>NUCLEOTIDE SEQUENCE [LARGE SCALE GENOMIC DNA]</scope>
    <source>
        <strain>ATCC BAA-33 / DSM 13638 / PS</strain>
    </source>
</reference>
<reference key="2">
    <citation type="journal article" date="2015" name="MBio">
        <title>Novel mechanism for scavenging of hypochlorite involving a periplasmic methionine-rich peptide and methionine sulfoxide reductase.</title>
        <authorList>
            <person name="Melnyk R.A."/>
            <person name="Youngblut M.D."/>
            <person name="Clark I.C."/>
            <person name="Carlson H.K."/>
            <person name="Wetmore K.M."/>
            <person name="Price M.N."/>
            <person name="Iavarone A.T."/>
            <person name="Deutschbauer A.M."/>
            <person name="Arkin A.P."/>
            <person name="Coates J.D."/>
        </authorList>
    </citation>
    <scope>FUNCTION</scope>
    <scope>INDUCTION</scope>
    <scope>DISRUPTION PHENOTYPE</scope>
    <source>
        <strain>ATCC BAA-33 / DSM 13638 / PS</strain>
    </source>
</reference>
<proteinExistence type="evidence at transcript level"/>